<dbReference type="EC" id="1.8.4.11" evidence="1"/>
<dbReference type="EMBL" id="FM180568">
    <property type="protein sequence ID" value="CAS12097.1"/>
    <property type="molecule type" value="Genomic_DNA"/>
</dbReference>
<dbReference type="RefSeq" id="WP_012579041.1">
    <property type="nucleotide sequence ID" value="NC_011601.1"/>
</dbReference>
<dbReference type="SMR" id="B7UQN3"/>
<dbReference type="KEGG" id="ecg:E2348C_4549"/>
<dbReference type="HOGENOM" id="CLU_031040_10_3_6"/>
<dbReference type="Proteomes" id="UP000008205">
    <property type="component" value="Chromosome"/>
</dbReference>
<dbReference type="GO" id="GO:0005737">
    <property type="term" value="C:cytoplasm"/>
    <property type="evidence" value="ECO:0007669"/>
    <property type="project" value="TreeGrafter"/>
</dbReference>
<dbReference type="GO" id="GO:0036456">
    <property type="term" value="F:L-methionine-(S)-S-oxide reductase activity"/>
    <property type="evidence" value="ECO:0007669"/>
    <property type="project" value="TreeGrafter"/>
</dbReference>
<dbReference type="GO" id="GO:0008113">
    <property type="term" value="F:peptide-methionine (S)-S-oxide reductase activity"/>
    <property type="evidence" value="ECO:0007669"/>
    <property type="project" value="UniProtKB-UniRule"/>
</dbReference>
<dbReference type="GO" id="GO:0034599">
    <property type="term" value="P:cellular response to oxidative stress"/>
    <property type="evidence" value="ECO:0007669"/>
    <property type="project" value="TreeGrafter"/>
</dbReference>
<dbReference type="GO" id="GO:0036211">
    <property type="term" value="P:protein modification process"/>
    <property type="evidence" value="ECO:0007669"/>
    <property type="project" value="UniProtKB-UniRule"/>
</dbReference>
<dbReference type="FunFam" id="3.30.1060.10:FF:000001">
    <property type="entry name" value="Peptide methionine sulfoxide reductase MsrA"/>
    <property type="match status" value="1"/>
</dbReference>
<dbReference type="Gene3D" id="3.30.1060.10">
    <property type="entry name" value="Peptide methionine sulphoxide reductase MsrA"/>
    <property type="match status" value="1"/>
</dbReference>
<dbReference type="HAMAP" id="MF_01401">
    <property type="entry name" value="MsrA"/>
    <property type="match status" value="1"/>
</dbReference>
<dbReference type="InterPro" id="IPR002569">
    <property type="entry name" value="Met_Sox_Rdtase_MsrA_dom"/>
</dbReference>
<dbReference type="InterPro" id="IPR036509">
    <property type="entry name" value="Met_Sox_Rdtase_MsrA_sf"/>
</dbReference>
<dbReference type="InterPro" id="IPR050162">
    <property type="entry name" value="MsrA_MetSO_reductase"/>
</dbReference>
<dbReference type="NCBIfam" id="TIGR00401">
    <property type="entry name" value="msrA"/>
    <property type="match status" value="1"/>
</dbReference>
<dbReference type="PANTHER" id="PTHR42799">
    <property type="entry name" value="MITOCHONDRIAL PEPTIDE METHIONINE SULFOXIDE REDUCTASE"/>
    <property type="match status" value="1"/>
</dbReference>
<dbReference type="PANTHER" id="PTHR42799:SF2">
    <property type="entry name" value="MITOCHONDRIAL PEPTIDE METHIONINE SULFOXIDE REDUCTASE"/>
    <property type="match status" value="1"/>
</dbReference>
<dbReference type="Pfam" id="PF01625">
    <property type="entry name" value="PMSR"/>
    <property type="match status" value="1"/>
</dbReference>
<dbReference type="SUPFAM" id="SSF55068">
    <property type="entry name" value="Peptide methionine sulfoxide reductase"/>
    <property type="match status" value="1"/>
</dbReference>
<sequence>MSLFDKKHLVSPADALPGRNTPMPVATLHAVNGHSMTNVPDGMEIAIFAMGCFWGVERLFWQLHGVYSTAAGYTGGYTPNPTYREVCSGDTGHAEAVRIVYDPSVISYEQLLQVFWENHDPAQGMRQGNDHGTQYRSAIYPLTPEQDAAARASLERFQAAMLAADDDRRITTEIANATPFYYAEDDHQQYLHKNPYGYCGIGGIGVCLPPEA</sequence>
<feature type="chain" id="PRO_1000184561" description="Peptide methionine sulfoxide reductase MsrA">
    <location>
        <begin position="1"/>
        <end position="212"/>
    </location>
</feature>
<feature type="active site" evidence="1">
    <location>
        <position position="52"/>
    </location>
</feature>
<gene>
    <name evidence="1" type="primary">msrA</name>
    <name type="ordered locus">E2348C_4549</name>
</gene>
<evidence type="ECO:0000255" key="1">
    <source>
        <dbReference type="HAMAP-Rule" id="MF_01401"/>
    </source>
</evidence>
<protein>
    <recommendedName>
        <fullName evidence="1">Peptide methionine sulfoxide reductase MsrA</fullName>
        <shortName evidence="1">Protein-methionine-S-oxide reductase</shortName>
        <ecNumber evidence="1">1.8.4.11</ecNumber>
    </recommendedName>
    <alternativeName>
        <fullName evidence="1">Peptide-methionine (S)-S-oxide reductase</fullName>
        <shortName evidence="1">Peptide Met(O) reductase</shortName>
    </alternativeName>
</protein>
<accession>B7UQN3</accession>
<reference key="1">
    <citation type="journal article" date="2009" name="J. Bacteriol.">
        <title>Complete genome sequence and comparative genome analysis of enteropathogenic Escherichia coli O127:H6 strain E2348/69.</title>
        <authorList>
            <person name="Iguchi A."/>
            <person name="Thomson N.R."/>
            <person name="Ogura Y."/>
            <person name="Saunders D."/>
            <person name="Ooka T."/>
            <person name="Henderson I.R."/>
            <person name="Harris D."/>
            <person name="Asadulghani M."/>
            <person name="Kurokawa K."/>
            <person name="Dean P."/>
            <person name="Kenny B."/>
            <person name="Quail M.A."/>
            <person name="Thurston S."/>
            <person name="Dougan G."/>
            <person name="Hayashi T."/>
            <person name="Parkhill J."/>
            <person name="Frankel G."/>
        </authorList>
    </citation>
    <scope>NUCLEOTIDE SEQUENCE [LARGE SCALE GENOMIC DNA]</scope>
    <source>
        <strain>E2348/69 / EPEC</strain>
    </source>
</reference>
<name>MSRA_ECO27</name>
<keyword id="KW-0560">Oxidoreductase</keyword>
<keyword id="KW-1185">Reference proteome</keyword>
<organism>
    <name type="scientific">Escherichia coli O127:H6 (strain E2348/69 / EPEC)</name>
    <dbReference type="NCBI Taxonomy" id="574521"/>
    <lineage>
        <taxon>Bacteria</taxon>
        <taxon>Pseudomonadati</taxon>
        <taxon>Pseudomonadota</taxon>
        <taxon>Gammaproteobacteria</taxon>
        <taxon>Enterobacterales</taxon>
        <taxon>Enterobacteriaceae</taxon>
        <taxon>Escherichia</taxon>
    </lineage>
</organism>
<comment type="function">
    <text evidence="1">Has an important function as a repair enzyme for proteins that have been inactivated by oxidation. Catalyzes the reversible oxidation-reduction of methionine sulfoxide in proteins to methionine.</text>
</comment>
<comment type="catalytic activity">
    <reaction evidence="1">
        <text>L-methionyl-[protein] + [thioredoxin]-disulfide + H2O = L-methionyl-(S)-S-oxide-[protein] + [thioredoxin]-dithiol</text>
        <dbReference type="Rhea" id="RHEA:14217"/>
        <dbReference type="Rhea" id="RHEA-COMP:10698"/>
        <dbReference type="Rhea" id="RHEA-COMP:10700"/>
        <dbReference type="Rhea" id="RHEA-COMP:12313"/>
        <dbReference type="Rhea" id="RHEA-COMP:12315"/>
        <dbReference type="ChEBI" id="CHEBI:15377"/>
        <dbReference type="ChEBI" id="CHEBI:16044"/>
        <dbReference type="ChEBI" id="CHEBI:29950"/>
        <dbReference type="ChEBI" id="CHEBI:44120"/>
        <dbReference type="ChEBI" id="CHEBI:50058"/>
        <dbReference type="EC" id="1.8.4.11"/>
    </reaction>
</comment>
<comment type="catalytic activity">
    <reaction evidence="1">
        <text>[thioredoxin]-disulfide + L-methionine + H2O = L-methionine (S)-S-oxide + [thioredoxin]-dithiol</text>
        <dbReference type="Rhea" id="RHEA:19993"/>
        <dbReference type="Rhea" id="RHEA-COMP:10698"/>
        <dbReference type="Rhea" id="RHEA-COMP:10700"/>
        <dbReference type="ChEBI" id="CHEBI:15377"/>
        <dbReference type="ChEBI" id="CHEBI:29950"/>
        <dbReference type="ChEBI" id="CHEBI:50058"/>
        <dbReference type="ChEBI" id="CHEBI:57844"/>
        <dbReference type="ChEBI" id="CHEBI:58772"/>
        <dbReference type="EC" id="1.8.4.11"/>
    </reaction>
</comment>
<comment type="similarity">
    <text evidence="1">Belongs to the MsrA Met sulfoxide reductase family.</text>
</comment>
<proteinExistence type="inferred from homology"/>